<comment type="function">
    <text evidence="2">One of the essential components for the initiation of protein synthesis. Protects formylmethionyl-tRNA from spontaneous hydrolysis and promotes its binding to the 30S ribosomal subunits. Also involved in the hydrolysis of GTP during the formation of the 70S ribosomal complex.</text>
</comment>
<comment type="subcellular location">
    <subcellularLocation>
        <location evidence="2">Cytoplasm</location>
    </subcellularLocation>
</comment>
<comment type="similarity">
    <text evidence="2">Belongs to the TRAFAC class translation factor GTPase superfamily. Classic translation factor GTPase family. IF-2 subfamily.</text>
</comment>
<dbReference type="EMBL" id="CP000879">
    <property type="protein sequence ID" value="ABX30999.1"/>
    <property type="molecule type" value="Genomic_DNA"/>
</dbReference>
<dbReference type="RefSeq" id="WP_012208106.1">
    <property type="nucleotide sequence ID" value="NC_010003.1"/>
</dbReference>
<dbReference type="SMR" id="A9BJ54"/>
<dbReference type="STRING" id="403833.Pmob_0255"/>
<dbReference type="KEGG" id="pmo:Pmob_0255"/>
<dbReference type="eggNOG" id="COG0532">
    <property type="taxonomic scope" value="Bacteria"/>
</dbReference>
<dbReference type="HOGENOM" id="CLU_006301_5_1_0"/>
<dbReference type="OrthoDB" id="9811804at2"/>
<dbReference type="Proteomes" id="UP000000789">
    <property type="component" value="Chromosome"/>
</dbReference>
<dbReference type="GO" id="GO:0005829">
    <property type="term" value="C:cytosol"/>
    <property type="evidence" value="ECO:0007669"/>
    <property type="project" value="TreeGrafter"/>
</dbReference>
<dbReference type="GO" id="GO:0005525">
    <property type="term" value="F:GTP binding"/>
    <property type="evidence" value="ECO:0007669"/>
    <property type="project" value="UniProtKB-KW"/>
</dbReference>
<dbReference type="GO" id="GO:0003924">
    <property type="term" value="F:GTPase activity"/>
    <property type="evidence" value="ECO:0007669"/>
    <property type="project" value="UniProtKB-UniRule"/>
</dbReference>
<dbReference type="GO" id="GO:0003743">
    <property type="term" value="F:translation initiation factor activity"/>
    <property type="evidence" value="ECO:0007669"/>
    <property type="project" value="UniProtKB-UniRule"/>
</dbReference>
<dbReference type="CDD" id="cd01887">
    <property type="entry name" value="IF2_eIF5B"/>
    <property type="match status" value="1"/>
</dbReference>
<dbReference type="CDD" id="cd03702">
    <property type="entry name" value="IF2_mtIF2_II"/>
    <property type="match status" value="1"/>
</dbReference>
<dbReference type="CDD" id="cd03692">
    <property type="entry name" value="mtIF2_IVc"/>
    <property type="match status" value="1"/>
</dbReference>
<dbReference type="FunFam" id="2.40.30.10:FF:000008">
    <property type="entry name" value="Translation initiation factor IF-2"/>
    <property type="match status" value="1"/>
</dbReference>
<dbReference type="FunFam" id="2.40.30.10:FF:000054">
    <property type="entry name" value="Translation initiation factor IF-2"/>
    <property type="match status" value="1"/>
</dbReference>
<dbReference type="FunFam" id="3.40.50.10050:FF:000001">
    <property type="entry name" value="Translation initiation factor IF-2"/>
    <property type="match status" value="1"/>
</dbReference>
<dbReference type="FunFam" id="3.40.50.300:FF:000019">
    <property type="entry name" value="Translation initiation factor IF-2"/>
    <property type="match status" value="1"/>
</dbReference>
<dbReference type="Gene3D" id="1.10.10.2480">
    <property type="match status" value="1"/>
</dbReference>
<dbReference type="Gene3D" id="3.40.50.300">
    <property type="entry name" value="P-loop containing nucleotide triphosphate hydrolases"/>
    <property type="match status" value="1"/>
</dbReference>
<dbReference type="Gene3D" id="2.40.30.10">
    <property type="entry name" value="Translation factors"/>
    <property type="match status" value="2"/>
</dbReference>
<dbReference type="Gene3D" id="3.40.50.10050">
    <property type="entry name" value="Translation initiation factor IF- 2, domain 3"/>
    <property type="match status" value="1"/>
</dbReference>
<dbReference type="HAMAP" id="MF_00100_B">
    <property type="entry name" value="IF_2_B"/>
    <property type="match status" value="1"/>
</dbReference>
<dbReference type="InterPro" id="IPR053905">
    <property type="entry name" value="EF-G-like_DII"/>
</dbReference>
<dbReference type="InterPro" id="IPR044145">
    <property type="entry name" value="IF2_II"/>
</dbReference>
<dbReference type="InterPro" id="IPR006847">
    <property type="entry name" value="IF2_N"/>
</dbReference>
<dbReference type="InterPro" id="IPR027417">
    <property type="entry name" value="P-loop_NTPase"/>
</dbReference>
<dbReference type="InterPro" id="IPR005225">
    <property type="entry name" value="Small_GTP-bd"/>
</dbReference>
<dbReference type="InterPro" id="IPR000795">
    <property type="entry name" value="T_Tr_GTP-bd_dom"/>
</dbReference>
<dbReference type="InterPro" id="IPR000178">
    <property type="entry name" value="TF_IF2_bacterial-like"/>
</dbReference>
<dbReference type="InterPro" id="IPR015760">
    <property type="entry name" value="TIF_IF2"/>
</dbReference>
<dbReference type="InterPro" id="IPR023115">
    <property type="entry name" value="TIF_IF2_dom3"/>
</dbReference>
<dbReference type="InterPro" id="IPR036925">
    <property type="entry name" value="TIF_IF2_dom3_sf"/>
</dbReference>
<dbReference type="InterPro" id="IPR009000">
    <property type="entry name" value="Transl_B-barrel_sf"/>
</dbReference>
<dbReference type="NCBIfam" id="TIGR00487">
    <property type="entry name" value="IF-2"/>
    <property type="match status" value="1"/>
</dbReference>
<dbReference type="NCBIfam" id="TIGR00231">
    <property type="entry name" value="small_GTP"/>
    <property type="match status" value="1"/>
</dbReference>
<dbReference type="PANTHER" id="PTHR43381:SF5">
    <property type="entry name" value="TR-TYPE G DOMAIN-CONTAINING PROTEIN"/>
    <property type="match status" value="1"/>
</dbReference>
<dbReference type="PANTHER" id="PTHR43381">
    <property type="entry name" value="TRANSLATION INITIATION FACTOR IF-2-RELATED"/>
    <property type="match status" value="1"/>
</dbReference>
<dbReference type="Pfam" id="PF22042">
    <property type="entry name" value="EF-G_D2"/>
    <property type="match status" value="1"/>
</dbReference>
<dbReference type="Pfam" id="PF00009">
    <property type="entry name" value="GTP_EFTU"/>
    <property type="match status" value="1"/>
</dbReference>
<dbReference type="Pfam" id="PF11987">
    <property type="entry name" value="IF-2"/>
    <property type="match status" value="1"/>
</dbReference>
<dbReference type="Pfam" id="PF04760">
    <property type="entry name" value="IF2_N"/>
    <property type="match status" value="1"/>
</dbReference>
<dbReference type="SUPFAM" id="SSF52156">
    <property type="entry name" value="Initiation factor IF2/eIF5b, domain 3"/>
    <property type="match status" value="1"/>
</dbReference>
<dbReference type="SUPFAM" id="SSF52540">
    <property type="entry name" value="P-loop containing nucleoside triphosphate hydrolases"/>
    <property type="match status" value="1"/>
</dbReference>
<dbReference type="SUPFAM" id="SSF50447">
    <property type="entry name" value="Translation proteins"/>
    <property type="match status" value="2"/>
</dbReference>
<dbReference type="PROSITE" id="PS51722">
    <property type="entry name" value="G_TR_2"/>
    <property type="match status" value="1"/>
</dbReference>
<protein>
    <recommendedName>
        <fullName evidence="2">Translation initiation factor IF-2</fullName>
    </recommendedName>
</protein>
<reference key="1">
    <citation type="submission" date="2007-11" db="EMBL/GenBank/DDBJ databases">
        <title>Complete sequence of Petroga mobilis SJ95.</title>
        <authorList>
            <consortium name="US DOE Joint Genome Institute"/>
            <person name="Copeland A."/>
            <person name="Lucas S."/>
            <person name="Lapidus A."/>
            <person name="Barry K."/>
            <person name="Glavina del Rio T."/>
            <person name="Dalin E."/>
            <person name="Tice H."/>
            <person name="Pitluck S."/>
            <person name="Meincke L."/>
            <person name="Brettin T."/>
            <person name="Bruce D."/>
            <person name="Detter J.C."/>
            <person name="Han C."/>
            <person name="Kuske C.R."/>
            <person name="Schmutz J."/>
            <person name="Larimer F."/>
            <person name="Land M."/>
            <person name="Hauser L."/>
            <person name="Kyrpides N."/>
            <person name="Mikhailova N."/>
            <person name="Noll K."/>
            <person name="Richardson P."/>
        </authorList>
    </citation>
    <scope>NUCLEOTIDE SEQUENCE [LARGE SCALE GENOMIC DNA]</scope>
    <source>
        <strain>DSM 10674 / SJ95</strain>
    </source>
</reference>
<keyword id="KW-0963">Cytoplasm</keyword>
<keyword id="KW-0342">GTP-binding</keyword>
<keyword id="KW-0396">Initiation factor</keyword>
<keyword id="KW-0547">Nucleotide-binding</keyword>
<keyword id="KW-0648">Protein biosynthesis</keyword>
<sequence>MSKTRIYEVAKELGMNSKELMEFLEKELNISVKSHMSTIEEETVQVIMDLIEEERQTKKEVKKQKEPSKEKGKSSEQVKVKEKSKEEPVEEKFLREVTITSHDLSLDILAKQIGLEQNDIIKDMFMKGVVLRPGQKLDITMAENIAMNYNVILNFEIEKKETEEGKEQDIEAILAKKWNDIYEKEKDKLAPRPPVVTIMGHVDHGKTTLLDKIRNTHVADKEEGGITQSIGAYQIEYNGQKITFIDTPGHEAFTEMRARGAQVTDIVVLIIAADDGVMPQTIEAYNHAKSANVPIIVAINKIDKPNANVELTKQQMVSKLNLIPEDWGGDTITVLVSAKTGEGIDELLEMILLVSEMQEIRCIPDGKARAVIIESRVDKAMGPLGTVIVKDGILKVGDDFISGSTYGRVRRLINDKGESLIKAVPSTPVQVLGFNDVPNTHSILYVIDSKEEARTLAEKVKEKEEEKSKGPAKRHVKLEDIMQKMEEEEKKKLNILLKASTYGEIEALRNAIQKFENPEIDIEIIHAGIGPVSTSDIMLASASDAIVLGFRVKADSKALKMAEAEGIEVRRYNIIFDLIDDIKKALEGMLEPIQKEELTGNGVIKEEFKIKGVGKIAGVQVNEGYVQRDGGVRIYRNGGLIADVKIKSLKHYKDEVKSIEAPKECGIQFENFEDFTKGDELEFYKHVFVKRELGLEQKTK</sequence>
<evidence type="ECO:0000250" key="1"/>
<evidence type="ECO:0000255" key="2">
    <source>
        <dbReference type="HAMAP-Rule" id="MF_00100"/>
    </source>
</evidence>
<evidence type="ECO:0000256" key="3">
    <source>
        <dbReference type="SAM" id="MobiDB-lite"/>
    </source>
</evidence>
<organism>
    <name type="scientific">Petrotoga mobilis (strain DSM 10674 / SJ95)</name>
    <dbReference type="NCBI Taxonomy" id="403833"/>
    <lineage>
        <taxon>Bacteria</taxon>
        <taxon>Thermotogati</taxon>
        <taxon>Thermotogota</taxon>
        <taxon>Thermotogae</taxon>
        <taxon>Petrotogales</taxon>
        <taxon>Petrotogaceae</taxon>
        <taxon>Petrotoga</taxon>
    </lineage>
</organism>
<accession>A9BJ54</accession>
<name>IF2_PETMO</name>
<gene>
    <name evidence="2" type="primary">infB</name>
    <name type="ordered locus">Pmob_0255</name>
</gene>
<proteinExistence type="inferred from homology"/>
<feature type="chain" id="PRO_1000075612" description="Translation initiation factor IF-2">
    <location>
        <begin position="1"/>
        <end position="700"/>
    </location>
</feature>
<feature type="domain" description="tr-type G">
    <location>
        <begin position="191"/>
        <end position="365"/>
    </location>
</feature>
<feature type="region of interest" description="Disordered" evidence="3">
    <location>
        <begin position="58"/>
        <end position="85"/>
    </location>
</feature>
<feature type="region of interest" description="G1" evidence="1">
    <location>
        <begin position="200"/>
        <end position="207"/>
    </location>
</feature>
<feature type="region of interest" description="G2" evidence="1">
    <location>
        <begin position="225"/>
        <end position="229"/>
    </location>
</feature>
<feature type="region of interest" description="G3" evidence="1">
    <location>
        <begin position="246"/>
        <end position="249"/>
    </location>
</feature>
<feature type="region of interest" description="G4" evidence="1">
    <location>
        <begin position="300"/>
        <end position="303"/>
    </location>
</feature>
<feature type="region of interest" description="G5" evidence="1">
    <location>
        <begin position="337"/>
        <end position="339"/>
    </location>
</feature>
<feature type="binding site" evidence="2">
    <location>
        <begin position="200"/>
        <end position="207"/>
    </location>
    <ligand>
        <name>GTP</name>
        <dbReference type="ChEBI" id="CHEBI:37565"/>
    </ligand>
</feature>
<feature type="binding site" evidence="2">
    <location>
        <begin position="246"/>
        <end position="250"/>
    </location>
    <ligand>
        <name>GTP</name>
        <dbReference type="ChEBI" id="CHEBI:37565"/>
    </ligand>
</feature>
<feature type="binding site" evidence="2">
    <location>
        <begin position="300"/>
        <end position="303"/>
    </location>
    <ligand>
        <name>GTP</name>
        <dbReference type="ChEBI" id="CHEBI:37565"/>
    </ligand>
</feature>